<feature type="chain" id="PRO_0000166658" description="Phosphoenolpyruvate carboxylase 2">
    <location>
        <begin position="1"/>
        <end position="963"/>
    </location>
</feature>
<feature type="active site" evidence="1">
    <location>
        <position position="172"/>
    </location>
</feature>
<feature type="active site" evidence="1">
    <location>
        <position position="599"/>
    </location>
</feature>
<feature type="modified residue" description="Phosphoserine" evidence="2">
    <location>
        <position position="11"/>
    </location>
</feature>
<feature type="modified residue" description="Phosphoserine" evidence="5">
    <location>
        <position position="701"/>
    </location>
</feature>
<feature type="sequence conflict" description="In Ref. 2; AAP43628." evidence="4" ref="2">
    <original>E</original>
    <variation>D</variation>
    <location>
        <position position="453"/>
    </location>
</feature>
<feature type="sequence conflict" description="In Ref. 2; AAP43628." evidence="4" ref="2">
    <original>S</original>
    <variation>T</variation>
    <location>
        <position position="456"/>
    </location>
</feature>
<feature type="sequence conflict" description="In Ref. 1; CAD58726." evidence="4" ref="1">
    <original>W</original>
    <variation>R</variation>
    <location>
        <position position="770"/>
    </location>
</feature>
<feature type="sequence conflict" description="In Ref. 2; AAP43628." evidence="4" ref="2">
    <original>S</original>
    <variation>N</variation>
    <location>
        <position position="799"/>
    </location>
</feature>
<sequence length="963" mass="109753">MAARNLEKMASIDAQLRLLAPGKVSEDDKLIEYDALLLDRFLDILQDLHGEDVREFVQECYEVAADYDGNRNTEKLEELGNMLTSLDPGDSIVVTKSFSNMLSLANLAEEVQIAYRRRIKKLKKGDFADEASATTESDIEETLKRLLQLNKTPEEVFDALKNQTVDLVLTAHPTQSVRRSLLQKFGRIRDCLTQLYAKDITPDDKQELDEALQREIQAAFRTDEIRRTPPTPQDEMRAGMSYFHETIWKGVPKFLRRVDTALKNIGINERVPYNAPLIQFSSWMGGDRDGNPRVTPEVTRDVCLLARMMAANLYFSQIEDLMFEMSMWRCNEELRVRAERQRCAKRDAKHYIEFWKQIPANEPYRAILGDVRDKLYNTRERARQLLSSGVSDVPEDAVFTSVDQFLEPLELCYRSLCDCGDRPIADGSLLDFLRQVSTFGLALVKLDIRQESERHSDVLDAITTHLGIGSYKEWSEDKRQEWLLSELSGKRPLFGPDLPKTEEVADVLDTFKVISELPSDSFGAYIISMATAPSDVLAVELLQRECGITDPLRVVPLFEKLADLESAPAAVARLFSIEWYRNRINGKQEVMIGYSDSGKDAGRLSAAWQLYKTQEELVKVAKEYGVKLTMFHGRGGTVGRGGGPTHLAILSQPPDTIHGQLRVTVQGEVIEQSFGEEHLCFRTLQRFTAATLEHGMHPPVSPKPEWRVLMDEMAIIATEEYRSVVFKEPRFVEYFRLATPELEYGRMNIGSRPSKRKPSGGIESLRAIPWIFAWTQTRFHLPVWLGFGGAFKRVIQKDSKNLNMLKEMYNQWPFFRVTIDLVEMVFAKGDPGIAALYDRLLVSEELQPFGEQLRVNYQETRRLLLQVAGHKDILEGDPYLRQRLQLRDPYITTLNVCQAYTLKQIRDPSFHVKVRPHLSKDYMESSPAAELVKLNPKSEYAPGLEDTVILTMKGIAAGMQNTG</sequence>
<gene>
    <name type="primary">PPC2</name>
    <name type="ordered locus">At2g42600</name>
    <name type="ORF">F14N22.13</name>
</gene>
<reference key="1">
    <citation type="journal article" date="2003" name="Plant Physiol.">
        <title>Identification and expression analysis of a gene encoding a bacterial-type phosphoenolpyruvate carboxylase from Arabidopsis and rice.</title>
        <authorList>
            <person name="Sanchez R."/>
            <person name="Cejudo F.J."/>
        </authorList>
    </citation>
    <scope>NUCLEOTIDE SEQUENCE [MRNA]</scope>
    <scope>TISSUE SPECIFICITY</scope>
    <scope>NOMENCLATURE</scope>
    <source>
        <strain>cv. Columbia</strain>
    </source>
</reference>
<reference key="2">
    <citation type="submission" date="2005-02" db="EMBL/GenBank/DDBJ databases">
        <title>Cloning of Arabidopsis guard cell PEP carboxylase.</title>
        <authorList>
            <person name="Zanor M.I."/>
            <person name="Plesch G."/>
            <person name="Mueller-Roeber B."/>
        </authorList>
    </citation>
    <scope>NUCLEOTIDE SEQUENCE [MRNA]</scope>
</reference>
<reference key="3">
    <citation type="journal article" date="1999" name="Nature">
        <title>Sequence and analysis of chromosome 2 of the plant Arabidopsis thaliana.</title>
        <authorList>
            <person name="Lin X."/>
            <person name="Kaul S."/>
            <person name="Rounsley S.D."/>
            <person name="Shea T.P."/>
            <person name="Benito M.-I."/>
            <person name="Town C.D."/>
            <person name="Fujii C.Y."/>
            <person name="Mason T.M."/>
            <person name="Bowman C.L."/>
            <person name="Barnstead M.E."/>
            <person name="Feldblyum T.V."/>
            <person name="Buell C.R."/>
            <person name="Ketchum K.A."/>
            <person name="Lee J.J."/>
            <person name="Ronning C.M."/>
            <person name="Koo H.L."/>
            <person name="Moffat K.S."/>
            <person name="Cronin L.A."/>
            <person name="Shen M."/>
            <person name="Pai G."/>
            <person name="Van Aken S."/>
            <person name="Umayam L."/>
            <person name="Tallon L.J."/>
            <person name="Gill J.E."/>
            <person name="Adams M.D."/>
            <person name="Carrera A.J."/>
            <person name="Creasy T.H."/>
            <person name="Goodman H.M."/>
            <person name="Somerville C.R."/>
            <person name="Copenhaver G.P."/>
            <person name="Preuss D."/>
            <person name="Nierman W.C."/>
            <person name="White O."/>
            <person name="Eisen J.A."/>
            <person name="Salzberg S.L."/>
            <person name="Fraser C.M."/>
            <person name="Venter J.C."/>
        </authorList>
    </citation>
    <scope>NUCLEOTIDE SEQUENCE [LARGE SCALE GENOMIC DNA]</scope>
    <source>
        <strain>cv. Columbia</strain>
    </source>
</reference>
<reference key="4">
    <citation type="journal article" date="2017" name="Plant J.">
        <title>Araport11: a complete reannotation of the Arabidopsis thaliana reference genome.</title>
        <authorList>
            <person name="Cheng C.Y."/>
            <person name="Krishnakumar V."/>
            <person name="Chan A.P."/>
            <person name="Thibaud-Nissen F."/>
            <person name="Schobel S."/>
            <person name="Town C.D."/>
        </authorList>
    </citation>
    <scope>GENOME REANNOTATION</scope>
    <source>
        <strain>cv. Columbia</strain>
    </source>
</reference>
<reference key="5">
    <citation type="journal article" date="2008" name="J. Proteome Res.">
        <title>Site-specific phosphorylation profiling of Arabidopsis proteins by mass spectrometry and peptide chip analysis.</title>
        <authorList>
            <person name="de la Fuente van Bentem S."/>
            <person name="Anrather D."/>
            <person name="Dohnal I."/>
            <person name="Roitinger E."/>
            <person name="Csaszar E."/>
            <person name="Joore J."/>
            <person name="Buijnink J."/>
            <person name="Carreri A."/>
            <person name="Forzani C."/>
            <person name="Lorkovic Z.J."/>
            <person name="Barta A."/>
            <person name="Lecourieux D."/>
            <person name="Verhounig A."/>
            <person name="Jonak C."/>
            <person name="Hirt H."/>
        </authorList>
    </citation>
    <scope>PHOSPHORYLATION [LARGE SCALE ANALYSIS] AT SER-701</scope>
    <scope>IDENTIFICATION BY MASS SPECTROMETRY [LARGE SCALE ANALYSIS]</scope>
    <source>
        <tissue>Root</tissue>
    </source>
</reference>
<organism>
    <name type="scientific">Arabidopsis thaliana</name>
    <name type="common">Mouse-ear cress</name>
    <dbReference type="NCBI Taxonomy" id="3702"/>
    <lineage>
        <taxon>Eukaryota</taxon>
        <taxon>Viridiplantae</taxon>
        <taxon>Streptophyta</taxon>
        <taxon>Embryophyta</taxon>
        <taxon>Tracheophyta</taxon>
        <taxon>Spermatophyta</taxon>
        <taxon>Magnoliopsida</taxon>
        <taxon>eudicotyledons</taxon>
        <taxon>Gunneridae</taxon>
        <taxon>Pentapetalae</taxon>
        <taxon>rosids</taxon>
        <taxon>malvids</taxon>
        <taxon>Brassicales</taxon>
        <taxon>Brassicaceae</taxon>
        <taxon>Camelineae</taxon>
        <taxon>Arabidopsis</taxon>
    </lineage>
</organism>
<keyword id="KW-0021">Allosteric enzyme</keyword>
<keyword id="KW-0120">Carbon dioxide fixation</keyword>
<keyword id="KW-0963">Cytoplasm</keyword>
<keyword id="KW-0456">Lyase</keyword>
<keyword id="KW-0460">Magnesium</keyword>
<keyword id="KW-0597">Phosphoprotein</keyword>
<keyword id="KW-0602">Photosynthesis</keyword>
<keyword id="KW-1185">Reference proteome</keyword>
<dbReference type="EC" id="4.1.1.31"/>
<dbReference type="EMBL" id="AJ532902">
    <property type="protein sequence ID" value="CAD58726.1"/>
    <property type="molecule type" value="mRNA"/>
</dbReference>
<dbReference type="EMBL" id="AY210895">
    <property type="protein sequence ID" value="AAP43628.1"/>
    <property type="molecule type" value="mRNA"/>
</dbReference>
<dbReference type="EMBL" id="AC007087">
    <property type="protein sequence ID" value="AAD22994.1"/>
    <property type="status" value="ALT_SEQ"/>
    <property type="molecule type" value="Genomic_DNA"/>
</dbReference>
<dbReference type="EMBL" id="CP002685">
    <property type="protein sequence ID" value="AEC10145.1"/>
    <property type="molecule type" value="Genomic_DNA"/>
</dbReference>
<dbReference type="EMBL" id="CP002685">
    <property type="protein sequence ID" value="AEC10146.1"/>
    <property type="molecule type" value="Genomic_DNA"/>
</dbReference>
<dbReference type="EMBL" id="CP002685">
    <property type="protein sequence ID" value="ANM62337.1"/>
    <property type="molecule type" value="Genomic_DNA"/>
</dbReference>
<dbReference type="PIR" id="H84855">
    <property type="entry name" value="H84855"/>
</dbReference>
<dbReference type="RefSeq" id="NP_001324501.1">
    <property type="nucleotide sequence ID" value="NM_001336987.1"/>
</dbReference>
<dbReference type="RefSeq" id="NP_850372.4">
    <property type="nucleotide sequence ID" value="NM_180041.5"/>
</dbReference>
<dbReference type="RefSeq" id="NP_850373.4">
    <property type="nucleotide sequence ID" value="NM_180042.5"/>
</dbReference>
<dbReference type="SMR" id="Q5GM68"/>
<dbReference type="BioGRID" id="4197">
    <property type="interactions" value="9"/>
</dbReference>
<dbReference type="FunCoup" id="Q5GM68">
    <property type="interactions" value="730"/>
</dbReference>
<dbReference type="STRING" id="3702.Q5GM68"/>
<dbReference type="iPTMnet" id="Q5GM68"/>
<dbReference type="MetOSite" id="Q5GM68"/>
<dbReference type="PaxDb" id="3702-AT2G42600.1"/>
<dbReference type="ProteomicsDB" id="239093"/>
<dbReference type="EnsemblPlants" id="AT2G42600.1">
    <property type="protein sequence ID" value="AT2G42600.1"/>
    <property type="gene ID" value="AT2G42600"/>
</dbReference>
<dbReference type="EnsemblPlants" id="AT2G42600.2">
    <property type="protein sequence ID" value="AT2G42600.2"/>
    <property type="gene ID" value="AT2G42600"/>
</dbReference>
<dbReference type="EnsemblPlants" id="AT2G42600.3">
    <property type="protein sequence ID" value="AT2G42600.3"/>
    <property type="gene ID" value="AT2G42600"/>
</dbReference>
<dbReference type="GeneID" id="818860"/>
<dbReference type="Gramene" id="AT2G42600.1">
    <property type="protein sequence ID" value="AT2G42600.1"/>
    <property type="gene ID" value="AT2G42600"/>
</dbReference>
<dbReference type="Gramene" id="AT2G42600.2">
    <property type="protein sequence ID" value="AT2G42600.2"/>
    <property type="gene ID" value="AT2G42600"/>
</dbReference>
<dbReference type="Gramene" id="AT2G42600.3">
    <property type="protein sequence ID" value="AT2G42600.3"/>
    <property type="gene ID" value="AT2G42600"/>
</dbReference>
<dbReference type="KEGG" id="ath:AT2G42600"/>
<dbReference type="Araport" id="AT2G42600"/>
<dbReference type="TAIR" id="AT2G42600">
    <property type="gene designation" value="PPC2"/>
</dbReference>
<dbReference type="eggNOG" id="ENOG502QPVS">
    <property type="taxonomic scope" value="Eukaryota"/>
</dbReference>
<dbReference type="HOGENOM" id="CLU_006557_2_0_1"/>
<dbReference type="InParanoid" id="Q5GM68"/>
<dbReference type="OMA" id="WAQYETQ"/>
<dbReference type="PhylomeDB" id="Q5GM68"/>
<dbReference type="BRENDA" id="4.1.1.31">
    <property type="organism ID" value="399"/>
</dbReference>
<dbReference type="PRO" id="PR:Q5GM68"/>
<dbReference type="Proteomes" id="UP000006548">
    <property type="component" value="Chromosome 2"/>
</dbReference>
<dbReference type="ExpressionAtlas" id="Q5GM68">
    <property type="expression patterns" value="baseline and differential"/>
</dbReference>
<dbReference type="GO" id="GO:0048046">
    <property type="term" value="C:apoplast"/>
    <property type="evidence" value="ECO:0007005"/>
    <property type="project" value="TAIR"/>
</dbReference>
<dbReference type="GO" id="GO:0009507">
    <property type="term" value="C:chloroplast"/>
    <property type="evidence" value="ECO:0007005"/>
    <property type="project" value="TAIR"/>
</dbReference>
<dbReference type="GO" id="GO:0005829">
    <property type="term" value="C:cytosol"/>
    <property type="evidence" value="ECO:0007005"/>
    <property type="project" value="TAIR"/>
</dbReference>
<dbReference type="GO" id="GO:0009506">
    <property type="term" value="C:plasmodesma"/>
    <property type="evidence" value="ECO:0007005"/>
    <property type="project" value="TAIR"/>
</dbReference>
<dbReference type="GO" id="GO:0008964">
    <property type="term" value="F:phosphoenolpyruvate carboxylase activity"/>
    <property type="evidence" value="ECO:0000314"/>
    <property type="project" value="TAIR"/>
</dbReference>
<dbReference type="GO" id="GO:0015977">
    <property type="term" value="P:carbon fixation"/>
    <property type="evidence" value="ECO:0007669"/>
    <property type="project" value="UniProtKB-KW"/>
</dbReference>
<dbReference type="GO" id="GO:0048366">
    <property type="term" value="P:leaf development"/>
    <property type="evidence" value="ECO:0000316"/>
    <property type="project" value="TAIR"/>
</dbReference>
<dbReference type="GO" id="GO:0015979">
    <property type="term" value="P:photosynthesis"/>
    <property type="evidence" value="ECO:0007669"/>
    <property type="project" value="UniProtKB-KW"/>
</dbReference>
<dbReference type="GO" id="GO:0006099">
    <property type="term" value="P:tricarboxylic acid cycle"/>
    <property type="evidence" value="ECO:0007669"/>
    <property type="project" value="InterPro"/>
</dbReference>
<dbReference type="FunFam" id="1.20.1440.90:FF:000001">
    <property type="entry name" value="Phosphoenolpyruvate carboxylase 1"/>
    <property type="match status" value="1"/>
</dbReference>
<dbReference type="Gene3D" id="1.20.1440.90">
    <property type="entry name" value="Phosphoenolpyruvate/pyruvate domain"/>
    <property type="match status" value="1"/>
</dbReference>
<dbReference type="HAMAP" id="MF_00595">
    <property type="entry name" value="PEPcase_type1"/>
    <property type="match status" value="1"/>
</dbReference>
<dbReference type="InterPro" id="IPR021135">
    <property type="entry name" value="PEP_COase"/>
</dbReference>
<dbReference type="InterPro" id="IPR022805">
    <property type="entry name" value="PEP_COase_bac/pln-type"/>
</dbReference>
<dbReference type="InterPro" id="IPR018129">
    <property type="entry name" value="PEP_COase_Lys_AS"/>
</dbReference>
<dbReference type="InterPro" id="IPR033129">
    <property type="entry name" value="PEPCASE_His_AS"/>
</dbReference>
<dbReference type="InterPro" id="IPR015813">
    <property type="entry name" value="Pyrv/PenolPyrv_kinase-like_dom"/>
</dbReference>
<dbReference type="NCBIfam" id="NF000584">
    <property type="entry name" value="PRK00009.1"/>
    <property type="match status" value="1"/>
</dbReference>
<dbReference type="PANTHER" id="PTHR30523">
    <property type="entry name" value="PHOSPHOENOLPYRUVATE CARBOXYLASE"/>
    <property type="match status" value="1"/>
</dbReference>
<dbReference type="PANTHER" id="PTHR30523:SF47">
    <property type="entry name" value="PHOSPHOENOLPYRUVATE CARBOXYLASE 2"/>
    <property type="match status" value="1"/>
</dbReference>
<dbReference type="Pfam" id="PF00311">
    <property type="entry name" value="PEPcase"/>
    <property type="match status" value="1"/>
</dbReference>
<dbReference type="PRINTS" id="PR00150">
    <property type="entry name" value="PEPCARBXLASE"/>
</dbReference>
<dbReference type="SUPFAM" id="SSF51621">
    <property type="entry name" value="Phosphoenolpyruvate/pyruvate domain"/>
    <property type="match status" value="1"/>
</dbReference>
<dbReference type="PROSITE" id="PS00781">
    <property type="entry name" value="PEPCASE_1"/>
    <property type="match status" value="1"/>
</dbReference>
<dbReference type="PROSITE" id="PS00393">
    <property type="entry name" value="PEPCASE_2"/>
    <property type="match status" value="1"/>
</dbReference>
<proteinExistence type="evidence at protein level"/>
<protein>
    <recommendedName>
        <fullName>Phosphoenolpyruvate carboxylase 2</fullName>
        <shortName>AtPPC2</shortName>
        <shortName>PEPC 2</shortName>
        <shortName>PEPCase 2</shortName>
        <ecNumber>4.1.1.31</ecNumber>
    </recommendedName>
</protein>
<comment type="function">
    <text>Through the carboxylation of phosphoenolpyruvate (PEP) it forms oxaloacetate, a four-carbon dicarboxylic acid source for the tricarboxylic acid cycle.</text>
</comment>
<comment type="catalytic activity">
    <reaction>
        <text>oxaloacetate + phosphate = phosphoenolpyruvate + hydrogencarbonate</text>
        <dbReference type="Rhea" id="RHEA:28370"/>
        <dbReference type="ChEBI" id="CHEBI:16452"/>
        <dbReference type="ChEBI" id="CHEBI:17544"/>
        <dbReference type="ChEBI" id="CHEBI:43474"/>
        <dbReference type="ChEBI" id="CHEBI:58702"/>
        <dbReference type="EC" id="4.1.1.31"/>
    </reaction>
</comment>
<comment type="cofactor">
    <cofactor evidence="1">
        <name>Mg(2+)</name>
        <dbReference type="ChEBI" id="CHEBI:18420"/>
    </cofactor>
</comment>
<comment type="activity regulation">
    <text evidence="1">By light-reversible phosphorylation.</text>
</comment>
<comment type="subunit">
    <text evidence="1">Homotetramer.</text>
</comment>
<comment type="subcellular location">
    <subcellularLocation>
        <location evidence="1">Cytoplasm</location>
    </subcellularLocation>
</comment>
<comment type="tissue specificity">
    <text evidence="3">Expressed in all plant organs, with higher levels in stems and leaves.</text>
</comment>
<comment type="similarity">
    <text evidence="4">Belongs to the PEPCase type 1 family.</text>
</comment>
<comment type="sequence caution" evidence="4">
    <conflict type="erroneous gene model prediction">
        <sequence resource="EMBL-CDS" id="AAD22994"/>
    </conflict>
</comment>
<accession>Q5GM68</accession>
<accession>Q8GVE9</accession>
<accession>Q9SIN0</accession>
<name>CAPP2_ARATH</name>
<evidence type="ECO:0000250" key="1"/>
<evidence type="ECO:0000250" key="2">
    <source>
        <dbReference type="UniProtKB" id="Q9MAH0"/>
    </source>
</evidence>
<evidence type="ECO:0000269" key="3">
    <source>
    </source>
</evidence>
<evidence type="ECO:0000305" key="4"/>
<evidence type="ECO:0007744" key="5">
    <source>
    </source>
</evidence>